<accession>B4TBJ3</accession>
<evidence type="ECO:0000255" key="1">
    <source>
        <dbReference type="HAMAP-Rule" id="MF_01356"/>
    </source>
</evidence>
<dbReference type="EC" id="7.1.1.-" evidence="1"/>
<dbReference type="EMBL" id="CP001120">
    <property type="protein sequence ID" value="ACF67677.1"/>
    <property type="molecule type" value="Genomic_DNA"/>
</dbReference>
<dbReference type="RefSeq" id="WP_000386728.1">
    <property type="nucleotide sequence ID" value="NC_011083.1"/>
</dbReference>
<dbReference type="SMR" id="B4TBJ3"/>
<dbReference type="KEGG" id="seh:SeHA_C2566"/>
<dbReference type="HOGENOM" id="CLU_055737_7_3_6"/>
<dbReference type="Proteomes" id="UP000001866">
    <property type="component" value="Chromosome"/>
</dbReference>
<dbReference type="GO" id="GO:0005886">
    <property type="term" value="C:plasma membrane"/>
    <property type="evidence" value="ECO:0007669"/>
    <property type="project" value="UniProtKB-SubCell"/>
</dbReference>
<dbReference type="GO" id="GO:0045271">
    <property type="term" value="C:respiratory chain complex I"/>
    <property type="evidence" value="ECO:0007669"/>
    <property type="project" value="TreeGrafter"/>
</dbReference>
<dbReference type="GO" id="GO:0051539">
    <property type="term" value="F:4 iron, 4 sulfur cluster binding"/>
    <property type="evidence" value="ECO:0007669"/>
    <property type="project" value="UniProtKB-KW"/>
</dbReference>
<dbReference type="GO" id="GO:0005506">
    <property type="term" value="F:iron ion binding"/>
    <property type="evidence" value="ECO:0007669"/>
    <property type="project" value="UniProtKB-UniRule"/>
</dbReference>
<dbReference type="GO" id="GO:0008137">
    <property type="term" value="F:NADH dehydrogenase (ubiquinone) activity"/>
    <property type="evidence" value="ECO:0007669"/>
    <property type="project" value="InterPro"/>
</dbReference>
<dbReference type="GO" id="GO:0050136">
    <property type="term" value="F:NADH:ubiquinone reductase (non-electrogenic) activity"/>
    <property type="evidence" value="ECO:0007669"/>
    <property type="project" value="UniProtKB-UniRule"/>
</dbReference>
<dbReference type="GO" id="GO:0048038">
    <property type="term" value="F:quinone binding"/>
    <property type="evidence" value="ECO:0007669"/>
    <property type="project" value="UniProtKB-KW"/>
</dbReference>
<dbReference type="GO" id="GO:0009060">
    <property type="term" value="P:aerobic respiration"/>
    <property type="evidence" value="ECO:0007669"/>
    <property type="project" value="TreeGrafter"/>
</dbReference>
<dbReference type="GO" id="GO:0015990">
    <property type="term" value="P:electron transport coupled proton transport"/>
    <property type="evidence" value="ECO:0007669"/>
    <property type="project" value="TreeGrafter"/>
</dbReference>
<dbReference type="FunFam" id="3.40.50.12280:FF:000002">
    <property type="entry name" value="NADH-quinone oxidoreductase subunit B"/>
    <property type="match status" value="1"/>
</dbReference>
<dbReference type="Gene3D" id="3.40.50.12280">
    <property type="match status" value="1"/>
</dbReference>
<dbReference type="HAMAP" id="MF_01356">
    <property type="entry name" value="NDH1_NuoB"/>
    <property type="match status" value="1"/>
</dbReference>
<dbReference type="InterPro" id="IPR006137">
    <property type="entry name" value="NADH_UbQ_OxRdtase-like_20kDa"/>
</dbReference>
<dbReference type="InterPro" id="IPR006138">
    <property type="entry name" value="NADH_UQ_OxRdtase_20Kd_su"/>
</dbReference>
<dbReference type="NCBIfam" id="TIGR01957">
    <property type="entry name" value="nuoB_fam"/>
    <property type="match status" value="1"/>
</dbReference>
<dbReference type="NCBIfam" id="NF005012">
    <property type="entry name" value="PRK06411.1"/>
    <property type="match status" value="1"/>
</dbReference>
<dbReference type="PANTHER" id="PTHR11995">
    <property type="entry name" value="NADH DEHYDROGENASE"/>
    <property type="match status" value="1"/>
</dbReference>
<dbReference type="PANTHER" id="PTHR11995:SF14">
    <property type="entry name" value="NADH DEHYDROGENASE [UBIQUINONE] IRON-SULFUR PROTEIN 7, MITOCHONDRIAL"/>
    <property type="match status" value="1"/>
</dbReference>
<dbReference type="Pfam" id="PF01058">
    <property type="entry name" value="Oxidored_q6"/>
    <property type="match status" value="1"/>
</dbReference>
<dbReference type="SUPFAM" id="SSF56770">
    <property type="entry name" value="HydA/Nqo6-like"/>
    <property type="match status" value="1"/>
</dbReference>
<dbReference type="PROSITE" id="PS01150">
    <property type="entry name" value="COMPLEX1_20K"/>
    <property type="match status" value="1"/>
</dbReference>
<proteinExistence type="inferred from homology"/>
<sequence length="220" mass="25089">MDYTLTRIDPNGENDRYPLQKQEIVTDPLEQEVNKNVFMGKLHDMVNWGRKNSIWPYNFGLSCCYVEMVTSFTAVHDVARFGAEVLRASPRQADLMVVAGTCFTKMAPVIQRLYDQMLEPKWVISMGACANSGGMYDIYSVVQGVDKFIPVDVYIPGCPPRPEAYMQALMLLQESIGKERRPLSWVVGDQGVYRANMQPERERKRGERIAVTNLRTPDEI</sequence>
<name>NUOB_SALHS</name>
<keyword id="KW-0004">4Fe-4S</keyword>
<keyword id="KW-0997">Cell inner membrane</keyword>
<keyword id="KW-1003">Cell membrane</keyword>
<keyword id="KW-0408">Iron</keyword>
<keyword id="KW-0411">Iron-sulfur</keyword>
<keyword id="KW-0472">Membrane</keyword>
<keyword id="KW-0479">Metal-binding</keyword>
<keyword id="KW-0520">NAD</keyword>
<keyword id="KW-0874">Quinone</keyword>
<keyword id="KW-1278">Translocase</keyword>
<keyword id="KW-0813">Transport</keyword>
<keyword id="KW-0830">Ubiquinone</keyword>
<gene>
    <name evidence="1" type="primary">nuoB</name>
    <name type="ordered locus">SeHA_C2566</name>
</gene>
<reference key="1">
    <citation type="journal article" date="2011" name="J. Bacteriol.">
        <title>Comparative genomics of 28 Salmonella enterica isolates: evidence for CRISPR-mediated adaptive sublineage evolution.</title>
        <authorList>
            <person name="Fricke W.F."/>
            <person name="Mammel M.K."/>
            <person name="McDermott P.F."/>
            <person name="Tartera C."/>
            <person name="White D.G."/>
            <person name="Leclerc J.E."/>
            <person name="Ravel J."/>
            <person name="Cebula T.A."/>
        </authorList>
    </citation>
    <scope>NUCLEOTIDE SEQUENCE [LARGE SCALE GENOMIC DNA]</scope>
    <source>
        <strain>SL476</strain>
    </source>
</reference>
<comment type="function">
    <text evidence="1">NDH-1 shuttles electrons from NADH, via FMN and iron-sulfur (Fe-S) centers, to quinones in the respiratory chain. The immediate electron acceptor for the enzyme in this species is believed to be ubiquinone. Couples the redox reaction to proton translocation (for every two electrons transferred, four hydrogen ions are translocated across the cytoplasmic membrane), and thus conserves the redox energy in a proton gradient.</text>
</comment>
<comment type="catalytic activity">
    <reaction evidence="1">
        <text>a quinone + NADH + 5 H(+)(in) = a quinol + NAD(+) + 4 H(+)(out)</text>
        <dbReference type="Rhea" id="RHEA:57888"/>
        <dbReference type="ChEBI" id="CHEBI:15378"/>
        <dbReference type="ChEBI" id="CHEBI:24646"/>
        <dbReference type="ChEBI" id="CHEBI:57540"/>
        <dbReference type="ChEBI" id="CHEBI:57945"/>
        <dbReference type="ChEBI" id="CHEBI:132124"/>
    </reaction>
</comment>
<comment type="cofactor">
    <cofactor evidence="1">
        <name>[4Fe-4S] cluster</name>
        <dbReference type="ChEBI" id="CHEBI:49883"/>
    </cofactor>
    <text evidence="1">Binds 1 [4Fe-4S] cluster.</text>
</comment>
<comment type="subunit">
    <text evidence="1">NDH-1 is composed of 13 different subunits. Subunits NuoB, CD, E, F, and G constitute the peripheral sector of the complex.</text>
</comment>
<comment type="subcellular location">
    <subcellularLocation>
        <location evidence="1">Cell inner membrane</location>
        <topology evidence="1">Peripheral membrane protein</topology>
        <orientation evidence="1">Cytoplasmic side</orientation>
    </subcellularLocation>
</comment>
<comment type="similarity">
    <text evidence="1">Belongs to the complex I 20 kDa subunit family.</text>
</comment>
<protein>
    <recommendedName>
        <fullName evidence="1">NADH-quinone oxidoreductase subunit B</fullName>
        <ecNumber evidence="1">7.1.1.-</ecNumber>
    </recommendedName>
    <alternativeName>
        <fullName evidence="1">NADH dehydrogenase I subunit B</fullName>
    </alternativeName>
    <alternativeName>
        <fullName evidence="1">NDH-1 subunit B</fullName>
    </alternativeName>
</protein>
<feature type="chain" id="PRO_0000376365" description="NADH-quinone oxidoreductase subunit B">
    <location>
        <begin position="1"/>
        <end position="220"/>
    </location>
</feature>
<feature type="binding site" evidence="1">
    <location>
        <position position="63"/>
    </location>
    <ligand>
        <name>[4Fe-4S] cluster</name>
        <dbReference type="ChEBI" id="CHEBI:49883"/>
    </ligand>
</feature>
<feature type="binding site" evidence="1">
    <location>
        <position position="64"/>
    </location>
    <ligand>
        <name>[4Fe-4S] cluster</name>
        <dbReference type="ChEBI" id="CHEBI:49883"/>
    </ligand>
</feature>
<feature type="binding site" evidence="1">
    <location>
        <position position="129"/>
    </location>
    <ligand>
        <name>[4Fe-4S] cluster</name>
        <dbReference type="ChEBI" id="CHEBI:49883"/>
    </ligand>
</feature>
<feature type="binding site" evidence="1">
    <location>
        <position position="158"/>
    </location>
    <ligand>
        <name>[4Fe-4S] cluster</name>
        <dbReference type="ChEBI" id="CHEBI:49883"/>
    </ligand>
</feature>
<organism>
    <name type="scientific">Salmonella heidelberg (strain SL476)</name>
    <dbReference type="NCBI Taxonomy" id="454169"/>
    <lineage>
        <taxon>Bacteria</taxon>
        <taxon>Pseudomonadati</taxon>
        <taxon>Pseudomonadota</taxon>
        <taxon>Gammaproteobacteria</taxon>
        <taxon>Enterobacterales</taxon>
        <taxon>Enterobacteriaceae</taxon>
        <taxon>Salmonella</taxon>
    </lineage>
</organism>